<feature type="chain" id="PRO_0000158750" description="Adenylate kinase">
    <location>
        <begin position="1"/>
        <end position="191"/>
    </location>
</feature>
<feature type="region of interest" description="NMP" evidence="1">
    <location>
        <begin position="30"/>
        <end position="59"/>
    </location>
</feature>
<feature type="region of interest" description="LID" evidence="1">
    <location>
        <begin position="126"/>
        <end position="136"/>
    </location>
</feature>
<feature type="binding site" evidence="1">
    <location>
        <begin position="10"/>
        <end position="15"/>
    </location>
    <ligand>
        <name>ATP</name>
        <dbReference type="ChEBI" id="CHEBI:30616"/>
    </ligand>
</feature>
<feature type="binding site" evidence="1">
    <location>
        <position position="31"/>
    </location>
    <ligand>
        <name>AMP</name>
        <dbReference type="ChEBI" id="CHEBI:456215"/>
    </ligand>
</feature>
<feature type="binding site" evidence="1">
    <location>
        <position position="36"/>
    </location>
    <ligand>
        <name>AMP</name>
        <dbReference type="ChEBI" id="CHEBI:456215"/>
    </ligand>
</feature>
<feature type="binding site" evidence="1">
    <location>
        <begin position="57"/>
        <end position="59"/>
    </location>
    <ligand>
        <name>AMP</name>
        <dbReference type="ChEBI" id="CHEBI:456215"/>
    </ligand>
</feature>
<feature type="binding site" evidence="1">
    <location>
        <begin position="85"/>
        <end position="88"/>
    </location>
    <ligand>
        <name>AMP</name>
        <dbReference type="ChEBI" id="CHEBI:456215"/>
    </ligand>
</feature>
<feature type="binding site" evidence="1">
    <location>
        <position position="92"/>
    </location>
    <ligand>
        <name>AMP</name>
        <dbReference type="ChEBI" id="CHEBI:456215"/>
    </ligand>
</feature>
<feature type="binding site" evidence="1">
    <location>
        <position position="127"/>
    </location>
    <ligand>
        <name>ATP</name>
        <dbReference type="ChEBI" id="CHEBI:30616"/>
    </ligand>
</feature>
<feature type="binding site" evidence="1">
    <location>
        <position position="133"/>
    </location>
    <ligand>
        <name>AMP</name>
        <dbReference type="ChEBI" id="CHEBI:456215"/>
    </ligand>
</feature>
<feature type="binding site" evidence="1">
    <location>
        <position position="144"/>
    </location>
    <ligand>
        <name>AMP</name>
        <dbReference type="ChEBI" id="CHEBI:456215"/>
    </ligand>
</feature>
<feature type="binding site" evidence="1">
    <location>
        <position position="172"/>
    </location>
    <ligand>
        <name>ATP</name>
        <dbReference type="ChEBI" id="CHEBI:30616"/>
    </ligand>
</feature>
<name>KAD_CAUVC</name>
<keyword id="KW-0067">ATP-binding</keyword>
<keyword id="KW-0963">Cytoplasm</keyword>
<keyword id="KW-0418">Kinase</keyword>
<keyword id="KW-0545">Nucleotide biosynthesis</keyword>
<keyword id="KW-0547">Nucleotide-binding</keyword>
<keyword id="KW-1185">Reference proteome</keyword>
<keyword id="KW-0808">Transferase</keyword>
<protein>
    <recommendedName>
        <fullName evidence="1">Adenylate kinase</fullName>
        <shortName evidence="1">AK</shortName>
        <ecNumber evidence="1">2.7.4.3</ecNumber>
    </recommendedName>
    <alternativeName>
        <fullName evidence="1">ATP-AMP transphosphorylase</fullName>
    </alternativeName>
    <alternativeName>
        <fullName evidence="1">ATP:AMP phosphotransferase</fullName>
    </alternativeName>
    <alternativeName>
        <fullName evidence="1">Adenylate monophosphate kinase</fullName>
    </alternativeName>
</protein>
<accession>Q9A8T2</accession>
<comment type="function">
    <text evidence="1">Catalyzes the reversible transfer of the terminal phosphate group between ATP and AMP. Plays an important role in cellular energy homeostasis and in adenine nucleotide metabolism.</text>
</comment>
<comment type="catalytic activity">
    <reaction evidence="1">
        <text>AMP + ATP = 2 ADP</text>
        <dbReference type="Rhea" id="RHEA:12973"/>
        <dbReference type="ChEBI" id="CHEBI:30616"/>
        <dbReference type="ChEBI" id="CHEBI:456215"/>
        <dbReference type="ChEBI" id="CHEBI:456216"/>
        <dbReference type="EC" id="2.7.4.3"/>
    </reaction>
</comment>
<comment type="pathway">
    <text evidence="1">Purine metabolism; AMP biosynthesis via salvage pathway; AMP from ADP: step 1/1.</text>
</comment>
<comment type="subunit">
    <text evidence="1">Monomer.</text>
</comment>
<comment type="subcellular location">
    <subcellularLocation>
        <location evidence="1">Cytoplasm</location>
    </subcellularLocation>
</comment>
<comment type="domain">
    <text evidence="1">Consists of three domains, a large central CORE domain and two small peripheral domains, NMPbind and LID, which undergo movements during catalysis. The LID domain closes over the site of phosphoryl transfer upon ATP binding. Assembling and dissambling the active center during each catalytic cycle provides an effective means to prevent ATP hydrolysis.</text>
</comment>
<comment type="similarity">
    <text evidence="1">Belongs to the adenylate kinase family.</text>
</comment>
<dbReference type="EC" id="2.7.4.3" evidence="1"/>
<dbReference type="EMBL" id="AE005673">
    <property type="protein sequence ID" value="AAK23250.1"/>
    <property type="molecule type" value="Genomic_DNA"/>
</dbReference>
<dbReference type="PIR" id="F87406">
    <property type="entry name" value="F87406"/>
</dbReference>
<dbReference type="RefSeq" id="NP_420082.1">
    <property type="nucleotide sequence ID" value="NC_002696.2"/>
</dbReference>
<dbReference type="RefSeq" id="WP_010919148.1">
    <property type="nucleotide sequence ID" value="NC_002696.2"/>
</dbReference>
<dbReference type="SMR" id="Q9A8T2"/>
<dbReference type="STRING" id="190650.CC_1269"/>
<dbReference type="EnsemblBacteria" id="AAK23250">
    <property type="protein sequence ID" value="AAK23250"/>
    <property type="gene ID" value="CC_1269"/>
</dbReference>
<dbReference type="KEGG" id="ccr:CC_1269"/>
<dbReference type="PATRIC" id="fig|190650.5.peg.1294"/>
<dbReference type="eggNOG" id="COG0563">
    <property type="taxonomic scope" value="Bacteria"/>
</dbReference>
<dbReference type="HOGENOM" id="CLU_032354_1_2_5"/>
<dbReference type="BioCyc" id="CAULO:CC1269-MONOMER"/>
<dbReference type="UniPathway" id="UPA00588">
    <property type="reaction ID" value="UER00649"/>
</dbReference>
<dbReference type="Proteomes" id="UP000001816">
    <property type="component" value="Chromosome"/>
</dbReference>
<dbReference type="GO" id="GO:0005737">
    <property type="term" value="C:cytoplasm"/>
    <property type="evidence" value="ECO:0007669"/>
    <property type="project" value="UniProtKB-SubCell"/>
</dbReference>
<dbReference type="GO" id="GO:0004017">
    <property type="term" value="F:adenylate kinase activity"/>
    <property type="evidence" value="ECO:0007669"/>
    <property type="project" value="UniProtKB-UniRule"/>
</dbReference>
<dbReference type="GO" id="GO:0005524">
    <property type="term" value="F:ATP binding"/>
    <property type="evidence" value="ECO:0007669"/>
    <property type="project" value="UniProtKB-UniRule"/>
</dbReference>
<dbReference type="GO" id="GO:0044209">
    <property type="term" value="P:AMP salvage"/>
    <property type="evidence" value="ECO:0007669"/>
    <property type="project" value="UniProtKB-UniRule"/>
</dbReference>
<dbReference type="CDD" id="cd01428">
    <property type="entry name" value="ADK"/>
    <property type="match status" value="1"/>
</dbReference>
<dbReference type="Gene3D" id="3.40.50.300">
    <property type="entry name" value="P-loop containing nucleotide triphosphate hydrolases"/>
    <property type="match status" value="1"/>
</dbReference>
<dbReference type="HAMAP" id="MF_00235">
    <property type="entry name" value="Adenylate_kinase_Adk"/>
    <property type="match status" value="1"/>
</dbReference>
<dbReference type="InterPro" id="IPR000850">
    <property type="entry name" value="Adenylat/UMP-CMP_kin"/>
</dbReference>
<dbReference type="InterPro" id="IPR033690">
    <property type="entry name" value="Adenylat_kinase_CS"/>
</dbReference>
<dbReference type="InterPro" id="IPR027417">
    <property type="entry name" value="P-loop_NTPase"/>
</dbReference>
<dbReference type="NCBIfam" id="NF001381">
    <property type="entry name" value="PRK00279.1-3"/>
    <property type="match status" value="1"/>
</dbReference>
<dbReference type="NCBIfam" id="NF011100">
    <property type="entry name" value="PRK14527.1"/>
    <property type="match status" value="1"/>
</dbReference>
<dbReference type="NCBIfam" id="NF011104">
    <property type="entry name" value="PRK14531.1"/>
    <property type="match status" value="1"/>
</dbReference>
<dbReference type="NCBIfam" id="NF011105">
    <property type="entry name" value="PRK14532.1"/>
    <property type="match status" value="1"/>
</dbReference>
<dbReference type="PANTHER" id="PTHR23359">
    <property type="entry name" value="NUCLEOTIDE KINASE"/>
    <property type="match status" value="1"/>
</dbReference>
<dbReference type="Pfam" id="PF00406">
    <property type="entry name" value="ADK"/>
    <property type="match status" value="1"/>
</dbReference>
<dbReference type="PRINTS" id="PR00094">
    <property type="entry name" value="ADENYLTKNASE"/>
</dbReference>
<dbReference type="SUPFAM" id="SSF52540">
    <property type="entry name" value="P-loop containing nucleoside triphosphate hydrolases"/>
    <property type="match status" value="1"/>
</dbReference>
<dbReference type="PROSITE" id="PS00113">
    <property type="entry name" value="ADENYLATE_KINASE"/>
    <property type="match status" value="1"/>
</dbReference>
<organism>
    <name type="scientific">Caulobacter vibrioides (strain ATCC 19089 / CIP 103742 / CB 15)</name>
    <name type="common">Caulobacter crescentus</name>
    <dbReference type="NCBI Taxonomy" id="190650"/>
    <lineage>
        <taxon>Bacteria</taxon>
        <taxon>Pseudomonadati</taxon>
        <taxon>Pseudomonadota</taxon>
        <taxon>Alphaproteobacteria</taxon>
        <taxon>Caulobacterales</taxon>
        <taxon>Caulobacteraceae</taxon>
        <taxon>Caulobacter</taxon>
    </lineage>
</organism>
<gene>
    <name evidence="1" type="primary">adk</name>
    <name type="ordered locus">CC_1269</name>
</gene>
<proteinExistence type="inferred from homology"/>
<evidence type="ECO:0000255" key="1">
    <source>
        <dbReference type="HAMAP-Rule" id="MF_00235"/>
    </source>
</evidence>
<sequence>MNLILFGPPAAGKGTQAKRLVTERGMVQLSTGDMLRAAIASGSELGQRVKGVLDRGELVTDEIVIALIEDRLPEAEAAGGAIFDGFPRTVAQAEALDKMLAARGQKIDVVLRLKVDEPALIERIKKRFEEQGRPDDNPEVFVTRLAAYNAQTAPLLPYYEGQGKLTELDGMGTVEAVAASIDSALEPVAAG</sequence>
<reference key="1">
    <citation type="journal article" date="2001" name="Proc. Natl. Acad. Sci. U.S.A.">
        <title>Complete genome sequence of Caulobacter crescentus.</title>
        <authorList>
            <person name="Nierman W.C."/>
            <person name="Feldblyum T.V."/>
            <person name="Laub M.T."/>
            <person name="Paulsen I.T."/>
            <person name="Nelson K.E."/>
            <person name="Eisen J.A."/>
            <person name="Heidelberg J.F."/>
            <person name="Alley M.R.K."/>
            <person name="Ohta N."/>
            <person name="Maddock J.R."/>
            <person name="Potocka I."/>
            <person name="Nelson W.C."/>
            <person name="Newton A."/>
            <person name="Stephens C."/>
            <person name="Phadke N.D."/>
            <person name="Ely B."/>
            <person name="DeBoy R.T."/>
            <person name="Dodson R.J."/>
            <person name="Durkin A.S."/>
            <person name="Gwinn M.L."/>
            <person name="Haft D.H."/>
            <person name="Kolonay J.F."/>
            <person name="Smit J."/>
            <person name="Craven M.B."/>
            <person name="Khouri H.M."/>
            <person name="Shetty J."/>
            <person name="Berry K.J."/>
            <person name="Utterback T.R."/>
            <person name="Tran K."/>
            <person name="Wolf A.M."/>
            <person name="Vamathevan J.J."/>
            <person name="Ermolaeva M.D."/>
            <person name="White O."/>
            <person name="Salzberg S.L."/>
            <person name="Venter J.C."/>
            <person name="Shapiro L."/>
            <person name="Fraser C.M."/>
        </authorList>
    </citation>
    <scope>NUCLEOTIDE SEQUENCE [LARGE SCALE GENOMIC DNA]</scope>
    <source>
        <strain>ATCC 19089 / CIP 103742 / CB 15</strain>
    </source>
</reference>